<evidence type="ECO:0000250" key="1">
    <source>
        <dbReference type="UniProtKB" id="Q96DW6"/>
    </source>
</evidence>
<evidence type="ECO:0000255" key="2">
    <source>
        <dbReference type="HAMAP-Rule" id="MF_03064"/>
    </source>
</evidence>
<sequence>MSSPPLSSPVPQVKTTQNGKSPDATVHLLAGAIAGLVSAVTLQPFDLLKTRLQQQQLTTKQEVRTTLTKELKKLTRVKDLWRGTLPSTLRTSIGAGLYFTTLSKMRTSWGEYKQSKDSSINLKSNSSILPKLTAMENLTTGFIARGIVGYITMPITIIKTRFESNLYNYNSMYEGISGIYLDDKKQQQQIRNPSINKGVGGGGSWKNFFKGSVATLARDCPYAGLYVLTYEAFKNDLIPLIIPNSSLSLSSSSSLSSSSSLFVFNDNNRSSIINSTAAVLAASTCTTITAPFDAIKTRLQLTNEEGGSMTTVLKKMLREDGGIKNLFRGLSLRLGRKGISAGISWCIYEELIKSNYFQSKFL</sequence>
<keyword id="KW-0472">Membrane</keyword>
<keyword id="KW-0496">Mitochondrion</keyword>
<keyword id="KW-0999">Mitochondrion inner membrane</keyword>
<keyword id="KW-1185">Reference proteome</keyword>
<keyword id="KW-0677">Repeat</keyword>
<keyword id="KW-0812">Transmembrane</keyword>
<keyword id="KW-1133">Transmembrane helix</keyword>
<keyword id="KW-0813">Transport</keyword>
<gene>
    <name type="ordered locus">CAALFM_CR04920WA</name>
    <name type="ORF">CaO19.1804</name>
</gene>
<comment type="function">
    <text evidence="2">Mitochondrial glycine transporter that imports glycine into the mitochondrial matrix. Plays an important role in providing glycine for the first enzymatic step in heme biosynthesis, the condensation of glycine with succinyl-CoA to produce 5-aminolevulinate (ALA) in the mitochondrial matrix.</text>
</comment>
<comment type="catalytic activity">
    <reaction evidence="1">
        <text>glycine(in) = glycine(out)</text>
        <dbReference type="Rhea" id="RHEA:70715"/>
        <dbReference type="ChEBI" id="CHEBI:57305"/>
    </reaction>
</comment>
<comment type="subcellular location">
    <subcellularLocation>
        <location evidence="2">Mitochondrion inner membrane</location>
        <topology evidence="2">Multi-pass membrane protein</topology>
    </subcellularLocation>
</comment>
<comment type="similarity">
    <text evidence="2">Belongs to the mitochondrial carrier (TC 2.A.29) family. SLC25A38 subfamily.</text>
</comment>
<reference key="1">
    <citation type="journal article" date="2004" name="Proc. Natl. Acad. Sci. U.S.A.">
        <title>The diploid genome sequence of Candida albicans.</title>
        <authorList>
            <person name="Jones T."/>
            <person name="Federspiel N.A."/>
            <person name="Chibana H."/>
            <person name="Dungan J."/>
            <person name="Kalman S."/>
            <person name="Magee B.B."/>
            <person name="Newport G."/>
            <person name="Thorstenson Y.R."/>
            <person name="Agabian N."/>
            <person name="Magee P.T."/>
            <person name="Davis R.W."/>
            <person name="Scherer S."/>
        </authorList>
    </citation>
    <scope>NUCLEOTIDE SEQUENCE [LARGE SCALE GENOMIC DNA]</scope>
    <source>
        <strain>SC5314 / ATCC MYA-2876</strain>
    </source>
</reference>
<reference key="2">
    <citation type="journal article" date="2007" name="Genome Biol.">
        <title>Assembly of the Candida albicans genome into sixteen supercontigs aligned on the eight chromosomes.</title>
        <authorList>
            <person name="van het Hoog M."/>
            <person name="Rast T.J."/>
            <person name="Martchenko M."/>
            <person name="Grindle S."/>
            <person name="Dignard D."/>
            <person name="Hogues H."/>
            <person name="Cuomo C."/>
            <person name="Berriman M."/>
            <person name="Scherer S."/>
            <person name="Magee B.B."/>
            <person name="Whiteway M."/>
            <person name="Chibana H."/>
            <person name="Nantel A."/>
            <person name="Magee P.T."/>
        </authorList>
    </citation>
    <scope>GENOME REANNOTATION</scope>
    <source>
        <strain>SC5314 / ATCC MYA-2876</strain>
    </source>
</reference>
<reference key="3">
    <citation type="journal article" date="2013" name="Genome Biol.">
        <title>Assembly of a phased diploid Candida albicans genome facilitates allele-specific measurements and provides a simple model for repeat and indel structure.</title>
        <authorList>
            <person name="Muzzey D."/>
            <person name="Schwartz K."/>
            <person name="Weissman J.S."/>
            <person name="Sherlock G."/>
        </authorList>
    </citation>
    <scope>NUCLEOTIDE SEQUENCE [LARGE SCALE GENOMIC DNA]</scope>
    <scope>GENOME REANNOTATION</scope>
    <source>
        <strain>SC5314 / ATCC MYA-2876</strain>
    </source>
</reference>
<feature type="chain" id="PRO_0000378931" description="Mitochondrial glycine transporter">
    <location>
        <begin position="1"/>
        <end position="362"/>
    </location>
</feature>
<feature type="transmembrane region" description="Helical; Name=1" evidence="2">
    <location>
        <begin position="28"/>
        <end position="53"/>
    </location>
</feature>
<feature type="transmembrane region" description="Helical; Name=2" evidence="2">
    <location>
        <begin position="83"/>
        <end position="109"/>
    </location>
</feature>
<feature type="transmembrane region" description="Helical; Name=3" evidence="2">
    <location>
        <begin position="138"/>
        <end position="163"/>
    </location>
</feature>
<feature type="transmembrane region" description="Helical; Name=4" evidence="2">
    <location>
        <begin position="211"/>
        <end position="234"/>
    </location>
</feature>
<feature type="transmembrane region" description="Helical; Name=5" evidence="2">
    <location>
        <begin position="273"/>
        <end position="299"/>
    </location>
</feature>
<feature type="transmembrane region" description="Helical; Name=6" evidence="2">
    <location>
        <begin position="329"/>
        <end position="347"/>
    </location>
</feature>
<feature type="repeat" description="Solcar 1" evidence="2">
    <location>
        <begin position="22"/>
        <end position="108"/>
    </location>
</feature>
<feature type="repeat" description="Solcar 2" evidence="2">
    <location>
        <begin position="132"/>
        <end position="236"/>
    </location>
</feature>
<feature type="repeat" description="Solcar 3" evidence="2">
    <location>
        <begin position="269"/>
        <end position="354"/>
    </location>
</feature>
<accession>Q59KC4</accession>
<accession>A0A1D8PSV7</accession>
<accession>Q59KD1</accession>
<name>S2538_CANAL</name>
<organism>
    <name type="scientific">Candida albicans (strain SC5314 / ATCC MYA-2876)</name>
    <name type="common">Yeast</name>
    <dbReference type="NCBI Taxonomy" id="237561"/>
    <lineage>
        <taxon>Eukaryota</taxon>
        <taxon>Fungi</taxon>
        <taxon>Dikarya</taxon>
        <taxon>Ascomycota</taxon>
        <taxon>Saccharomycotina</taxon>
        <taxon>Pichiomycetes</taxon>
        <taxon>Debaryomycetaceae</taxon>
        <taxon>Candida/Lodderomyces clade</taxon>
        <taxon>Candida</taxon>
    </lineage>
</organism>
<proteinExistence type="inferred from homology"/>
<dbReference type="EMBL" id="CP017630">
    <property type="protein sequence ID" value="AOW31225.1"/>
    <property type="molecule type" value="Genomic_DNA"/>
</dbReference>
<dbReference type="RefSeq" id="XP_710191.1">
    <property type="nucleotide sequence ID" value="XM_705099.2"/>
</dbReference>
<dbReference type="SMR" id="Q59KC4"/>
<dbReference type="FunCoup" id="Q59KC4">
    <property type="interactions" value="110"/>
</dbReference>
<dbReference type="STRING" id="237561.Q59KC4"/>
<dbReference type="EnsemblFungi" id="CR_04920W_A-T">
    <property type="protein sequence ID" value="CR_04920W_A-T-p1"/>
    <property type="gene ID" value="CR_04920W_A"/>
</dbReference>
<dbReference type="GeneID" id="3648207"/>
<dbReference type="KEGG" id="cal:CAALFM_CR04920WA"/>
<dbReference type="CGD" id="CAL0000196262">
    <property type="gene designation" value="orf19.9370"/>
</dbReference>
<dbReference type="VEuPathDB" id="FungiDB:CR_04920W_A"/>
<dbReference type="eggNOG" id="KOG0766">
    <property type="taxonomic scope" value="Eukaryota"/>
</dbReference>
<dbReference type="HOGENOM" id="CLU_015166_0_3_1"/>
<dbReference type="InParanoid" id="Q59KC4"/>
<dbReference type="OrthoDB" id="1924968at2759"/>
<dbReference type="PRO" id="PR:Q59KC4"/>
<dbReference type="Proteomes" id="UP000000559">
    <property type="component" value="Chromosome R"/>
</dbReference>
<dbReference type="GO" id="GO:0005743">
    <property type="term" value="C:mitochondrial inner membrane"/>
    <property type="evidence" value="ECO:0007669"/>
    <property type="project" value="UniProtKB-SubCell"/>
</dbReference>
<dbReference type="GO" id="GO:0005739">
    <property type="term" value="C:mitochondrion"/>
    <property type="evidence" value="ECO:0000318"/>
    <property type="project" value="GO_Central"/>
</dbReference>
<dbReference type="GO" id="GO:0015187">
    <property type="term" value="F:glycine transmembrane transporter activity"/>
    <property type="evidence" value="ECO:0000318"/>
    <property type="project" value="GO_Central"/>
</dbReference>
<dbReference type="GO" id="GO:1904983">
    <property type="term" value="P:glycine import into mitochondrion"/>
    <property type="evidence" value="ECO:0000318"/>
    <property type="project" value="GO_Central"/>
</dbReference>
<dbReference type="FunFam" id="1.50.40.10:FF:000103">
    <property type="entry name" value="Mitochondrial glycine transporter"/>
    <property type="match status" value="1"/>
</dbReference>
<dbReference type="Gene3D" id="1.50.40.10">
    <property type="entry name" value="Mitochondrial carrier domain"/>
    <property type="match status" value="1"/>
</dbReference>
<dbReference type="HAMAP" id="MF_03064">
    <property type="entry name" value="SLC25A38"/>
    <property type="match status" value="1"/>
</dbReference>
<dbReference type="InterPro" id="IPR030847">
    <property type="entry name" value="Hem25/SLC25A38"/>
</dbReference>
<dbReference type="InterPro" id="IPR002067">
    <property type="entry name" value="Mit_carrier"/>
</dbReference>
<dbReference type="InterPro" id="IPR018108">
    <property type="entry name" value="Mitochondrial_sb/sol_carrier"/>
</dbReference>
<dbReference type="InterPro" id="IPR023395">
    <property type="entry name" value="Mt_carrier_dom_sf"/>
</dbReference>
<dbReference type="PANTHER" id="PTHR46181">
    <property type="entry name" value="MITOCHONDRIAL GLYCINE TRANSPORTER"/>
    <property type="match status" value="1"/>
</dbReference>
<dbReference type="PANTHER" id="PTHR46181:SF3">
    <property type="entry name" value="MITOCHONDRIAL GLYCINE TRANSPORTER"/>
    <property type="match status" value="1"/>
</dbReference>
<dbReference type="Pfam" id="PF00153">
    <property type="entry name" value="Mito_carr"/>
    <property type="match status" value="3"/>
</dbReference>
<dbReference type="PRINTS" id="PR00926">
    <property type="entry name" value="MITOCARRIER"/>
</dbReference>
<dbReference type="SUPFAM" id="SSF103506">
    <property type="entry name" value="Mitochondrial carrier"/>
    <property type="match status" value="1"/>
</dbReference>
<dbReference type="PROSITE" id="PS50920">
    <property type="entry name" value="SOLCAR"/>
    <property type="match status" value="3"/>
</dbReference>
<protein>
    <recommendedName>
        <fullName evidence="2">Mitochondrial glycine transporter</fullName>
    </recommendedName>
    <alternativeName>
        <fullName evidence="2">Solute carrier family 25 member 38 homolog</fullName>
    </alternativeName>
</protein>